<feature type="chain" id="PRO_1000188976" description="Acetyl esterase">
    <location>
        <begin position="1"/>
        <end position="319"/>
    </location>
</feature>
<feature type="short sequence motif" description="Involved in the stabilization of the negatively charged intermediate by the formation of the oxyanion hole" evidence="1">
    <location>
        <begin position="91"/>
        <end position="93"/>
    </location>
</feature>
<feature type="active site" evidence="2">
    <location>
        <position position="165"/>
    </location>
</feature>
<feature type="active site" evidence="2">
    <location>
        <position position="262"/>
    </location>
</feature>
<feature type="active site" evidence="2">
    <location>
        <position position="292"/>
    </location>
</feature>
<dbReference type="EC" id="3.1.1.-" evidence="2"/>
<dbReference type="EMBL" id="CU928161">
    <property type="protein sequence ID" value="CAR01820.1"/>
    <property type="molecule type" value="Genomic_DNA"/>
</dbReference>
<dbReference type="RefSeq" id="WP_000801795.1">
    <property type="nucleotide sequence ID" value="NC_011742.1"/>
</dbReference>
<dbReference type="SMR" id="B7MDZ8"/>
<dbReference type="ESTHER" id="ecoli-Aes">
    <property type="family name" value="Acetyl_esterase"/>
</dbReference>
<dbReference type="MEROPS" id="S09.A47"/>
<dbReference type="KEGG" id="ecz:ECS88_0473"/>
<dbReference type="HOGENOM" id="CLU_012494_6_4_6"/>
<dbReference type="Proteomes" id="UP000000747">
    <property type="component" value="Chromosome"/>
</dbReference>
<dbReference type="GO" id="GO:0005737">
    <property type="term" value="C:cytoplasm"/>
    <property type="evidence" value="ECO:0007669"/>
    <property type="project" value="UniProtKB-SubCell"/>
</dbReference>
<dbReference type="GO" id="GO:0052689">
    <property type="term" value="F:carboxylic ester hydrolase activity"/>
    <property type="evidence" value="ECO:0007669"/>
    <property type="project" value="UniProtKB-UniRule"/>
</dbReference>
<dbReference type="FunFam" id="3.40.50.1820:FF:000035">
    <property type="entry name" value="Acetyl esterase"/>
    <property type="match status" value="1"/>
</dbReference>
<dbReference type="Gene3D" id="3.40.50.1820">
    <property type="entry name" value="alpha/beta hydrolase"/>
    <property type="match status" value="1"/>
</dbReference>
<dbReference type="HAMAP" id="MF_01958">
    <property type="entry name" value="Acetyl_esterase"/>
    <property type="match status" value="1"/>
</dbReference>
<dbReference type="InterPro" id="IPR013094">
    <property type="entry name" value="AB_hydrolase_3"/>
</dbReference>
<dbReference type="InterPro" id="IPR029058">
    <property type="entry name" value="AB_hydrolase_fold"/>
</dbReference>
<dbReference type="InterPro" id="IPR023508">
    <property type="entry name" value="Acetyl_esterase"/>
</dbReference>
<dbReference type="InterPro" id="IPR050300">
    <property type="entry name" value="GDXG_lipolytic_enzyme"/>
</dbReference>
<dbReference type="InterPro" id="IPR002168">
    <property type="entry name" value="Lipase_GDXG_HIS_AS"/>
</dbReference>
<dbReference type="InterPro" id="IPR033140">
    <property type="entry name" value="Lipase_GDXG_put_SER_AS"/>
</dbReference>
<dbReference type="NCBIfam" id="NF007547">
    <property type="entry name" value="PRK10162.1"/>
    <property type="match status" value="1"/>
</dbReference>
<dbReference type="PANTHER" id="PTHR48081">
    <property type="entry name" value="AB HYDROLASE SUPERFAMILY PROTEIN C4A8.06C"/>
    <property type="match status" value="1"/>
</dbReference>
<dbReference type="PANTHER" id="PTHR48081:SF8">
    <property type="entry name" value="ALPHA_BETA HYDROLASE FOLD-3 DOMAIN-CONTAINING PROTEIN-RELATED"/>
    <property type="match status" value="1"/>
</dbReference>
<dbReference type="Pfam" id="PF07859">
    <property type="entry name" value="Abhydrolase_3"/>
    <property type="match status" value="1"/>
</dbReference>
<dbReference type="SUPFAM" id="SSF53474">
    <property type="entry name" value="alpha/beta-Hydrolases"/>
    <property type="match status" value="1"/>
</dbReference>
<dbReference type="PROSITE" id="PS01173">
    <property type="entry name" value="LIPASE_GDXG_HIS"/>
    <property type="match status" value="1"/>
</dbReference>
<dbReference type="PROSITE" id="PS01174">
    <property type="entry name" value="LIPASE_GDXG_SER"/>
    <property type="match status" value="1"/>
</dbReference>
<comment type="function">
    <text evidence="2">Displays esterase activity towards short chain fatty esters (acyl chain length of up to 8 carbons). Able to hydrolyze triacetylglycerol (triacetin) and tributyrylglycerol (tributyrin), but not trioleylglycerol (triolein) or cholesterol oleate. Negatively regulates MalT activity by antagonizing maltotriose binding. Inhibits MelA galactosidase activity.</text>
</comment>
<comment type="subunit">
    <text evidence="2">Homodimer. Interacts with MalT and MelA.</text>
</comment>
<comment type="subcellular location">
    <subcellularLocation>
        <location evidence="2">Cytoplasm</location>
    </subcellularLocation>
</comment>
<comment type="similarity">
    <text evidence="2">Belongs to the 'GDXG' lipolytic enzyme family.</text>
</comment>
<sequence length="319" mass="36083">MKPENKLPVLDLISAEMKTVVNTLQPDLPPWPATGAIAEQRQYYTLERRFWNVGAPEMATRAYRVPTKYGQVKTRLFYPQPDSPATLFYLHGGGFILGNLDTHDRIMRLLASYSQCTVIGIDYTLSPEARFPQAIEEIVAACCYFHQQAEDYQINMSRIGFAGDSAGAMLALASALWLRDKQIDCGKVAGVLLWYGLYGLRDSVTRRLLGGVWDGLTQQDLQMYEEAYLSNDADRESPYYCLFNNDLTREVPPCFIAGAEFDPLLDDSCLLYQTLAAHQQPCEFKLYSGMLHAFLHYSRMMKTADEALRDGAQFFTAQL</sequence>
<accession>B7MDZ8</accession>
<evidence type="ECO:0000250" key="1">
    <source>
        <dbReference type="UniProtKB" id="Q5NUF3"/>
    </source>
</evidence>
<evidence type="ECO:0000255" key="2">
    <source>
        <dbReference type="HAMAP-Rule" id="MF_01958"/>
    </source>
</evidence>
<proteinExistence type="inferred from homology"/>
<organism>
    <name type="scientific">Escherichia coli O45:K1 (strain S88 / ExPEC)</name>
    <dbReference type="NCBI Taxonomy" id="585035"/>
    <lineage>
        <taxon>Bacteria</taxon>
        <taxon>Pseudomonadati</taxon>
        <taxon>Pseudomonadota</taxon>
        <taxon>Gammaproteobacteria</taxon>
        <taxon>Enterobacterales</taxon>
        <taxon>Enterobacteriaceae</taxon>
        <taxon>Escherichia</taxon>
    </lineage>
</organism>
<keyword id="KW-0963">Cytoplasm</keyword>
<keyword id="KW-0378">Hydrolase</keyword>
<keyword id="KW-1185">Reference proteome</keyword>
<keyword id="KW-0719">Serine esterase</keyword>
<gene>
    <name evidence="2" type="primary">aes</name>
    <name type="ordered locus">ECS88_0473</name>
</gene>
<name>AES_ECO45</name>
<protein>
    <recommendedName>
        <fullName evidence="2">Acetyl esterase</fullName>
        <ecNumber evidence="2">3.1.1.-</ecNumber>
    </recommendedName>
</protein>
<reference key="1">
    <citation type="journal article" date="2009" name="PLoS Genet.">
        <title>Organised genome dynamics in the Escherichia coli species results in highly diverse adaptive paths.</title>
        <authorList>
            <person name="Touchon M."/>
            <person name="Hoede C."/>
            <person name="Tenaillon O."/>
            <person name="Barbe V."/>
            <person name="Baeriswyl S."/>
            <person name="Bidet P."/>
            <person name="Bingen E."/>
            <person name="Bonacorsi S."/>
            <person name="Bouchier C."/>
            <person name="Bouvet O."/>
            <person name="Calteau A."/>
            <person name="Chiapello H."/>
            <person name="Clermont O."/>
            <person name="Cruveiller S."/>
            <person name="Danchin A."/>
            <person name="Diard M."/>
            <person name="Dossat C."/>
            <person name="Karoui M.E."/>
            <person name="Frapy E."/>
            <person name="Garry L."/>
            <person name="Ghigo J.M."/>
            <person name="Gilles A.M."/>
            <person name="Johnson J."/>
            <person name="Le Bouguenec C."/>
            <person name="Lescat M."/>
            <person name="Mangenot S."/>
            <person name="Martinez-Jehanne V."/>
            <person name="Matic I."/>
            <person name="Nassif X."/>
            <person name="Oztas S."/>
            <person name="Petit M.A."/>
            <person name="Pichon C."/>
            <person name="Rouy Z."/>
            <person name="Ruf C.S."/>
            <person name="Schneider D."/>
            <person name="Tourret J."/>
            <person name="Vacherie B."/>
            <person name="Vallenet D."/>
            <person name="Medigue C."/>
            <person name="Rocha E.P.C."/>
            <person name="Denamur E."/>
        </authorList>
    </citation>
    <scope>NUCLEOTIDE SEQUENCE [LARGE SCALE GENOMIC DNA]</scope>
    <source>
        <strain>S88 / ExPEC</strain>
    </source>
</reference>